<protein>
    <recommendedName>
        <fullName evidence="1">UPF0283 membrane protein BMEI0952</fullName>
    </recommendedName>
</protein>
<sequence>MSDKTPRKPTAFRLEQPARVSAASEQEEPRRPRAVKDLEQITPQADVFDLTDDEAAELEILDPAFEAPERKGWSLSRILFGALGILVSFAIGIWTEDLIRALFARADWLGWTALGVAMVALAAFAAIILRELVALRRLASVQHLRKDAADAAERDDMAAARKAVDALRSIAAGIPETAKGRQLLDSLTDDIIDGRDLIRLAETEILRPLDREARTLVLNASKRVSIVTAISPRALVDIGYVIFESARLIRRLSQLYGGRPGTLGFIKFARRVIAHLAVTGTIAMGDSVMQQLVGHGLASRLSAKLGEGVVNGLMTARIGIAAMDVVRPFPFNAEKRPGIGDFIGDLARLNSDRNARK</sequence>
<comment type="subcellular location">
    <subcellularLocation>
        <location evidence="1">Cell inner membrane</location>
        <topology evidence="1">Multi-pass membrane protein</topology>
    </subcellularLocation>
</comment>
<comment type="similarity">
    <text evidence="1">Belongs to the UPF0283 family.</text>
</comment>
<name>Y952_BRUME</name>
<organism>
    <name type="scientific">Brucella melitensis biotype 1 (strain ATCC 23456 / CCUG 17765 / NCTC 10094 / 16M)</name>
    <dbReference type="NCBI Taxonomy" id="224914"/>
    <lineage>
        <taxon>Bacteria</taxon>
        <taxon>Pseudomonadati</taxon>
        <taxon>Pseudomonadota</taxon>
        <taxon>Alphaproteobacteria</taxon>
        <taxon>Hyphomicrobiales</taxon>
        <taxon>Brucellaceae</taxon>
        <taxon>Brucella/Ochrobactrum group</taxon>
        <taxon>Brucella</taxon>
    </lineage>
</organism>
<gene>
    <name type="ordered locus">BMEI0952</name>
</gene>
<evidence type="ECO:0000255" key="1">
    <source>
        <dbReference type="HAMAP-Rule" id="MF_01085"/>
    </source>
</evidence>
<evidence type="ECO:0000256" key="2">
    <source>
        <dbReference type="SAM" id="MobiDB-lite"/>
    </source>
</evidence>
<accession>Q8YH52</accession>
<keyword id="KW-0997">Cell inner membrane</keyword>
<keyword id="KW-1003">Cell membrane</keyword>
<keyword id="KW-0472">Membrane</keyword>
<keyword id="KW-0812">Transmembrane</keyword>
<keyword id="KW-1133">Transmembrane helix</keyword>
<dbReference type="EMBL" id="AE008917">
    <property type="protein sequence ID" value="AAL52133.1"/>
    <property type="molecule type" value="Genomic_DNA"/>
</dbReference>
<dbReference type="PIR" id="AB3371">
    <property type="entry name" value="AB3371"/>
</dbReference>
<dbReference type="RefSeq" id="WP_004683772.1">
    <property type="nucleotide sequence ID" value="NC_003317.1"/>
</dbReference>
<dbReference type="GeneID" id="29593763"/>
<dbReference type="KEGG" id="bme:BMEI0952"/>
<dbReference type="KEGG" id="bmel:DK63_470"/>
<dbReference type="PATRIC" id="fig|224914.52.peg.490"/>
<dbReference type="eggNOG" id="COG3768">
    <property type="taxonomic scope" value="Bacteria"/>
</dbReference>
<dbReference type="Proteomes" id="UP000000419">
    <property type="component" value="Chromosome I"/>
</dbReference>
<dbReference type="GO" id="GO:0005886">
    <property type="term" value="C:plasma membrane"/>
    <property type="evidence" value="ECO:0007669"/>
    <property type="project" value="UniProtKB-SubCell"/>
</dbReference>
<dbReference type="HAMAP" id="MF_01085">
    <property type="entry name" value="UPF0283"/>
    <property type="match status" value="1"/>
</dbReference>
<dbReference type="InterPro" id="IPR021147">
    <property type="entry name" value="DUF697"/>
</dbReference>
<dbReference type="InterPro" id="IPR006507">
    <property type="entry name" value="UPF0283"/>
</dbReference>
<dbReference type="NCBIfam" id="TIGR01620">
    <property type="entry name" value="hyp_HI0043"/>
    <property type="match status" value="1"/>
</dbReference>
<dbReference type="PANTHER" id="PTHR39342">
    <property type="entry name" value="UPF0283 MEMBRANE PROTEIN YCJF"/>
    <property type="match status" value="1"/>
</dbReference>
<dbReference type="PANTHER" id="PTHR39342:SF1">
    <property type="entry name" value="UPF0283 MEMBRANE PROTEIN YCJF"/>
    <property type="match status" value="1"/>
</dbReference>
<dbReference type="Pfam" id="PF05128">
    <property type="entry name" value="DUF697"/>
    <property type="match status" value="1"/>
</dbReference>
<proteinExistence type="inferred from homology"/>
<reference key="1">
    <citation type="journal article" date="2002" name="Proc. Natl. Acad. Sci. U.S.A.">
        <title>The genome sequence of the facultative intracellular pathogen Brucella melitensis.</title>
        <authorList>
            <person name="DelVecchio V.G."/>
            <person name="Kapatral V."/>
            <person name="Redkar R.J."/>
            <person name="Patra G."/>
            <person name="Mujer C."/>
            <person name="Los T."/>
            <person name="Ivanova N."/>
            <person name="Anderson I."/>
            <person name="Bhattacharyya A."/>
            <person name="Lykidis A."/>
            <person name="Reznik G."/>
            <person name="Jablonski L."/>
            <person name="Larsen N."/>
            <person name="D'Souza M."/>
            <person name="Bernal A."/>
            <person name="Mazur M."/>
            <person name="Goltsman E."/>
            <person name="Selkov E."/>
            <person name="Elzer P.H."/>
            <person name="Hagius S."/>
            <person name="O'Callaghan D."/>
            <person name="Letesson J.-J."/>
            <person name="Haselkorn R."/>
            <person name="Kyrpides N.C."/>
            <person name="Overbeek R."/>
        </authorList>
    </citation>
    <scope>NUCLEOTIDE SEQUENCE [LARGE SCALE GENOMIC DNA]</scope>
    <source>
        <strain>ATCC 23456 / CCUG 17765 / NCTC 10094 / 16M</strain>
    </source>
</reference>
<feature type="chain" id="PRO_0000214170" description="UPF0283 membrane protein BMEI0952">
    <location>
        <begin position="1"/>
        <end position="357"/>
    </location>
</feature>
<feature type="transmembrane region" description="Helical" evidence="1">
    <location>
        <begin position="78"/>
        <end position="98"/>
    </location>
</feature>
<feature type="transmembrane region" description="Helical" evidence="1">
    <location>
        <begin position="109"/>
        <end position="129"/>
    </location>
</feature>
<feature type="region of interest" description="Disordered" evidence="2">
    <location>
        <begin position="1"/>
        <end position="36"/>
    </location>
</feature>
<feature type="compositionally biased region" description="Basic and acidic residues" evidence="2">
    <location>
        <begin position="27"/>
        <end position="36"/>
    </location>
</feature>